<sequence length="351" mass="39421">MEEKTPENEQSKKTFDPKDSMKIEETSTNGSSQPSQPSNIKLSIGSILESSNDNGDPEYSENGMGNMNMNTLPMATSTPMSYTKQPSEAKYPNSVWERKGVSDQEENTSSVKRQKTLPTQSSGEEEAKYSHPGAPTATSADSISMESRPSNLSTSLSKTTSYPQFQVRQFVSPIISIDNSALEPFLNRYPASESLFPVTEYEYTPWLEFPLLYSSIGKFVRVTIDIKWLNAAINPRLCRREIWGTDVYTDDSDIATILAHCGCFSLLKPVRKIAVVDLYILPPLVHYKGTRKNQIESRSWSSRQDGISLKIKEVTWKPACASIFENSIHTLTLEERLQARLELSRSSTFKI</sequence>
<protein>
    <recommendedName>
        <fullName>Transcriptional regulatory protein rxt3</fullName>
    </recommendedName>
</protein>
<dbReference type="EMBL" id="CU329672">
    <property type="protein sequence ID" value="CAA22545.1"/>
    <property type="molecule type" value="Genomic_DNA"/>
</dbReference>
<dbReference type="PIR" id="T40896">
    <property type="entry name" value="T40896"/>
</dbReference>
<dbReference type="RefSeq" id="NP_588063.1">
    <property type="nucleotide sequence ID" value="NM_001023055.2"/>
</dbReference>
<dbReference type="PDB" id="8I03">
    <property type="method" value="EM"/>
    <property type="resolution" value="3.20 A"/>
    <property type="chains" value="I=1-351"/>
</dbReference>
<dbReference type="PDBsum" id="8I03"/>
<dbReference type="EMDB" id="EMD-35093"/>
<dbReference type="SMR" id="O94707"/>
<dbReference type="BioGRID" id="275940">
    <property type="interactions" value="6"/>
</dbReference>
<dbReference type="ComplexPortal" id="CPX-9129">
    <property type="entry name" value="RPD3L histone deacetylase complex"/>
</dbReference>
<dbReference type="STRING" id="284812.O94707"/>
<dbReference type="iPTMnet" id="O94707"/>
<dbReference type="PaxDb" id="4896-SPCC1259.07.1"/>
<dbReference type="EnsemblFungi" id="SPCC1259.07.1">
    <property type="protein sequence ID" value="SPCC1259.07.1:pep"/>
    <property type="gene ID" value="SPCC1259.07"/>
</dbReference>
<dbReference type="GeneID" id="2539374"/>
<dbReference type="KEGG" id="spo:2539374"/>
<dbReference type="PomBase" id="SPCC1259.07">
    <property type="gene designation" value="rxt3"/>
</dbReference>
<dbReference type="VEuPathDB" id="FungiDB:SPCC1259.07"/>
<dbReference type="eggNOG" id="KOG4843">
    <property type="taxonomic scope" value="Eukaryota"/>
</dbReference>
<dbReference type="HOGENOM" id="CLU_774233_0_0_1"/>
<dbReference type="InParanoid" id="O94707"/>
<dbReference type="PRO" id="PR:O94707"/>
<dbReference type="Proteomes" id="UP000002485">
    <property type="component" value="Chromosome III"/>
</dbReference>
<dbReference type="GO" id="GO:0033698">
    <property type="term" value="C:Rpd3L complex"/>
    <property type="evidence" value="ECO:0000314"/>
    <property type="project" value="PomBase"/>
</dbReference>
<dbReference type="GO" id="GO:0070210">
    <property type="term" value="C:Rpd3L-Expanded complex"/>
    <property type="evidence" value="ECO:0000314"/>
    <property type="project" value="PomBase"/>
</dbReference>
<dbReference type="GO" id="GO:0045815">
    <property type="term" value="P:transcription initiation-coupled chromatin remodeling"/>
    <property type="evidence" value="ECO:0000305"/>
    <property type="project" value="PomBase"/>
</dbReference>
<dbReference type="Gene3D" id="2.170.130.20">
    <property type="entry name" value="LCCL-like domain"/>
    <property type="match status" value="1"/>
</dbReference>
<dbReference type="InterPro" id="IPR036609">
    <property type="entry name" value="LCCL_sf"/>
</dbReference>
<dbReference type="InterPro" id="IPR013951">
    <property type="entry name" value="Rxt3"/>
</dbReference>
<dbReference type="Pfam" id="PF08642">
    <property type="entry name" value="Rxt3"/>
    <property type="match status" value="1"/>
</dbReference>
<dbReference type="SUPFAM" id="SSF69848">
    <property type="entry name" value="LCCL domain"/>
    <property type="match status" value="1"/>
</dbReference>
<organism>
    <name type="scientific">Schizosaccharomyces pombe (strain 972 / ATCC 24843)</name>
    <name type="common">Fission yeast</name>
    <dbReference type="NCBI Taxonomy" id="284812"/>
    <lineage>
        <taxon>Eukaryota</taxon>
        <taxon>Fungi</taxon>
        <taxon>Dikarya</taxon>
        <taxon>Ascomycota</taxon>
        <taxon>Taphrinomycotina</taxon>
        <taxon>Schizosaccharomycetes</taxon>
        <taxon>Schizosaccharomycetales</taxon>
        <taxon>Schizosaccharomycetaceae</taxon>
        <taxon>Schizosaccharomyces</taxon>
    </lineage>
</organism>
<reference key="1">
    <citation type="journal article" date="2002" name="Nature">
        <title>The genome sequence of Schizosaccharomyces pombe.</title>
        <authorList>
            <person name="Wood V."/>
            <person name="Gwilliam R."/>
            <person name="Rajandream M.A."/>
            <person name="Lyne M.H."/>
            <person name="Lyne R."/>
            <person name="Stewart A."/>
            <person name="Sgouros J.G."/>
            <person name="Peat N."/>
            <person name="Hayles J."/>
            <person name="Baker S.G."/>
            <person name="Basham D."/>
            <person name="Bowman S."/>
            <person name="Brooks K."/>
            <person name="Brown D."/>
            <person name="Brown S."/>
            <person name="Chillingworth T."/>
            <person name="Churcher C.M."/>
            <person name="Collins M."/>
            <person name="Connor R."/>
            <person name="Cronin A."/>
            <person name="Davis P."/>
            <person name="Feltwell T."/>
            <person name="Fraser A."/>
            <person name="Gentles S."/>
            <person name="Goble A."/>
            <person name="Hamlin N."/>
            <person name="Harris D.E."/>
            <person name="Hidalgo J."/>
            <person name="Hodgson G."/>
            <person name="Holroyd S."/>
            <person name="Hornsby T."/>
            <person name="Howarth S."/>
            <person name="Huckle E.J."/>
            <person name="Hunt S."/>
            <person name="Jagels K."/>
            <person name="James K.D."/>
            <person name="Jones L."/>
            <person name="Jones M."/>
            <person name="Leather S."/>
            <person name="McDonald S."/>
            <person name="McLean J."/>
            <person name="Mooney P."/>
            <person name="Moule S."/>
            <person name="Mungall K.L."/>
            <person name="Murphy L.D."/>
            <person name="Niblett D."/>
            <person name="Odell C."/>
            <person name="Oliver K."/>
            <person name="O'Neil S."/>
            <person name="Pearson D."/>
            <person name="Quail M.A."/>
            <person name="Rabbinowitsch E."/>
            <person name="Rutherford K.M."/>
            <person name="Rutter S."/>
            <person name="Saunders D."/>
            <person name="Seeger K."/>
            <person name="Sharp S."/>
            <person name="Skelton J."/>
            <person name="Simmonds M.N."/>
            <person name="Squares R."/>
            <person name="Squares S."/>
            <person name="Stevens K."/>
            <person name="Taylor K."/>
            <person name="Taylor R.G."/>
            <person name="Tivey A."/>
            <person name="Walsh S.V."/>
            <person name="Warren T."/>
            <person name="Whitehead S."/>
            <person name="Woodward J.R."/>
            <person name="Volckaert G."/>
            <person name="Aert R."/>
            <person name="Robben J."/>
            <person name="Grymonprez B."/>
            <person name="Weltjens I."/>
            <person name="Vanstreels E."/>
            <person name="Rieger M."/>
            <person name="Schaefer M."/>
            <person name="Mueller-Auer S."/>
            <person name="Gabel C."/>
            <person name="Fuchs M."/>
            <person name="Duesterhoeft A."/>
            <person name="Fritzc C."/>
            <person name="Holzer E."/>
            <person name="Moestl D."/>
            <person name="Hilbert H."/>
            <person name="Borzym K."/>
            <person name="Langer I."/>
            <person name="Beck A."/>
            <person name="Lehrach H."/>
            <person name="Reinhardt R."/>
            <person name="Pohl T.M."/>
            <person name="Eger P."/>
            <person name="Zimmermann W."/>
            <person name="Wedler H."/>
            <person name="Wambutt R."/>
            <person name="Purnelle B."/>
            <person name="Goffeau A."/>
            <person name="Cadieu E."/>
            <person name="Dreano S."/>
            <person name="Gloux S."/>
            <person name="Lelaure V."/>
            <person name="Mottier S."/>
            <person name="Galibert F."/>
            <person name="Aves S.J."/>
            <person name="Xiang Z."/>
            <person name="Hunt C."/>
            <person name="Moore K."/>
            <person name="Hurst S.M."/>
            <person name="Lucas M."/>
            <person name="Rochet M."/>
            <person name="Gaillardin C."/>
            <person name="Tallada V.A."/>
            <person name="Garzon A."/>
            <person name="Thode G."/>
            <person name="Daga R.R."/>
            <person name="Cruzado L."/>
            <person name="Jimenez J."/>
            <person name="Sanchez M."/>
            <person name="del Rey F."/>
            <person name="Benito J."/>
            <person name="Dominguez A."/>
            <person name="Revuelta J.L."/>
            <person name="Moreno S."/>
            <person name="Armstrong J."/>
            <person name="Forsburg S.L."/>
            <person name="Cerutti L."/>
            <person name="Lowe T."/>
            <person name="McCombie W.R."/>
            <person name="Paulsen I."/>
            <person name="Potashkin J."/>
            <person name="Shpakovski G.V."/>
            <person name="Ussery D."/>
            <person name="Barrell B.G."/>
            <person name="Nurse P."/>
        </authorList>
    </citation>
    <scope>NUCLEOTIDE SEQUENCE [LARGE SCALE GENOMIC DNA]</scope>
    <source>
        <strain>972 / ATCC 24843</strain>
    </source>
</reference>
<reference key="2">
    <citation type="journal article" date="2008" name="Genome Biol.">
        <title>Chromatin Central: towards the comparative proteome by accurate mapping of the yeast proteomic environment.</title>
        <authorList>
            <person name="Shevchenko A."/>
            <person name="Roguev A."/>
            <person name="Schaft D."/>
            <person name="Buchanan L."/>
            <person name="Habermann B."/>
            <person name="Sakalar C."/>
            <person name="Thomas H."/>
            <person name="Krogan N.J."/>
            <person name="Shevchenko A."/>
            <person name="Stewart A.F."/>
        </authorList>
    </citation>
    <scope>IDENTIFICATION IN THE RPD3C(L) COMPLEX</scope>
    <scope>IDENTIFICATION BY MASS SPECTROMETRY</scope>
</reference>
<comment type="function">
    <text evidence="1">Component of the RPD3C(L) histone deacetylase complex (HDAC) responsible for the deacetylation of lysine residues on the N-terminal part of the core histones (H2A, H2B, H3 and H4). Histone deacetylation gives a tag for epigenetic repression and plays an important role in transcriptional regulation, cell cycle progression and developmental events (By similarity).</text>
</comment>
<comment type="subunit">
    <text evidence="3">Component of the RPD3C(L) complex.</text>
</comment>
<comment type="subcellular location">
    <subcellularLocation>
        <location evidence="1">Nucleus</location>
    </subcellularLocation>
</comment>
<comment type="similarity">
    <text evidence="4">Belongs to the RXT3 family.</text>
</comment>
<name>RXT3_SCHPO</name>
<accession>O94707</accession>
<keyword id="KW-0002">3D-structure</keyword>
<keyword id="KW-0156">Chromatin regulator</keyword>
<keyword id="KW-0539">Nucleus</keyword>
<keyword id="KW-1185">Reference proteome</keyword>
<keyword id="KW-0678">Repressor</keyword>
<keyword id="KW-0804">Transcription</keyword>
<keyword id="KW-0805">Transcription regulation</keyword>
<gene>
    <name type="primary">rxt3</name>
    <name type="ORF">SPCC1259.07</name>
</gene>
<proteinExistence type="evidence at protein level"/>
<evidence type="ECO:0000250" key="1"/>
<evidence type="ECO:0000256" key="2">
    <source>
        <dbReference type="SAM" id="MobiDB-lite"/>
    </source>
</evidence>
<evidence type="ECO:0000269" key="3">
    <source>
    </source>
</evidence>
<evidence type="ECO:0000305" key="4"/>
<evidence type="ECO:0007829" key="5">
    <source>
        <dbReference type="PDB" id="8I03"/>
    </source>
</evidence>
<feature type="chain" id="PRO_0000374009" description="Transcriptional regulatory protein rxt3">
    <location>
        <begin position="1"/>
        <end position="351"/>
    </location>
</feature>
<feature type="region of interest" description="Disordered" evidence="2">
    <location>
        <begin position="1"/>
        <end position="156"/>
    </location>
</feature>
<feature type="compositionally biased region" description="Basic and acidic residues" evidence="2">
    <location>
        <begin position="1"/>
        <end position="25"/>
    </location>
</feature>
<feature type="compositionally biased region" description="Polar residues" evidence="2">
    <location>
        <begin position="26"/>
        <end position="41"/>
    </location>
</feature>
<feature type="compositionally biased region" description="Polar residues" evidence="2">
    <location>
        <begin position="63"/>
        <end position="86"/>
    </location>
</feature>
<feature type="compositionally biased region" description="Polar residues" evidence="2">
    <location>
        <begin position="107"/>
        <end position="122"/>
    </location>
</feature>
<feature type="compositionally biased region" description="Polar residues" evidence="2">
    <location>
        <begin position="136"/>
        <end position="149"/>
    </location>
</feature>
<feature type="strand" evidence="5">
    <location>
        <begin position="175"/>
        <end position="178"/>
    </location>
</feature>
<feature type="helix" evidence="5">
    <location>
        <begin position="183"/>
        <end position="186"/>
    </location>
</feature>
<feature type="strand" evidence="5">
    <location>
        <begin position="200"/>
        <end position="202"/>
    </location>
</feature>
<feature type="helix" evidence="5">
    <location>
        <begin position="213"/>
        <end position="215"/>
    </location>
</feature>
<feature type="strand" evidence="5">
    <location>
        <begin position="219"/>
        <end position="224"/>
    </location>
</feature>
<feature type="helix" evidence="5">
    <location>
        <begin position="227"/>
        <end position="229"/>
    </location>
</feature>
<feature type="turn" evidence="5">
    <location>
        <begin position="231"/>
        <end position="233"/>
    </location>
</feature>
<feature type="helix" evidence="5">
    <location>
        <begin position="236"/>
        <end position="239"/>
    </location>
</feature>
<feature type="strand" evidence="5">
    <location>
        <begin position="243"/>
        <end position="249"/>
    </location>
</feature>
<feature type="helix" evidence="5">
    <location>
        <begin position="254"/>
        <end position="260"/>
    </location>
</feature>
<feature type="strand" evidence="5">
    <location>
        <begin position="266"/>
        <end position="268"/>
    </location>
</feature>
<feature type="strand" evidence="5">
    <location>
        <begin position="274"/>
        <end position="281"/>
    </location>
</feature>
<feature type="strand" evidence="5">
    <location>
        <begin position="308"/>
        <end position="316"/>
    </location>
</feature>
<feature type="helix" evidence="5">
    <location>
        <begin position="324"/>
        <end position="327"/>
    </location>
</feature>
<feature type="turn" evidence="5">
    <location>
        <begin position="328"/>
        <end position="330"/>
    </location>
</feature>
<feature type="helix" evidence="5">
    <location>
        <begin position="333"/>
        <end position="343"/>
    </location>
</feature>